<organism>
    <name type="scientific">Mycobacterium tuberculosis (strain ATCC 25618 / H37Rv)</name>
    <dbReference type="NCBI Taxonomy" id="83332"/>
    <lineage>
        <taxon>Bacteria</taxon>
        <taxon>Bacillati</taxon>
        <taxon>Actinomycetota</taxon>
        <taxon>Actinomycetes</taxon>
        <taxon>Mycobacteriales</taxon>
        <taxon>Mycobacteriaceae</taxon>
        <taxon>Mycobacterium</taxon>
        <taxon>Mycobacterium tuberculosis complex</taxon>
    </lineage>
</organism>
<keyword id="KW-1185">Reference proteome</keyword>
<keyword id="KW-0677">Repeat</keyword>
<accession>P9WIF7</accession>
<accession>L0T9A9</accession>
<accession>Q10637</accession>
<comment type="similarity">
    <text evidence="2">Belongs to the mycobacterial PE family. PGRS subfamily.</text>
</comment>
<dbReference type="EMBL" id="AL123456">
    <property type="protein sequence ID" value="CCP44083.1"/>
    <property type="molecule type" value="Genomic_DNA"/>
</dbReference>
<dbReference type="PIR" id="A70770">
    <property type="entry name" value="A70770"/>
</dbReference>
<dbReference type="RefSeq" id="WP_010886112.1">
    <property type="nucleotide sequence ID" value="NZ_KK339370.1"/>
</dbReference>
<dbReference type="RefSeq" id="YP_177799.1">
    <property type="nucleotide sequence ID" value="NC_000962.3"/>
</dbReference>
<dbReference type="STRING" id="83332.Rv1325c"/>
<dbReference type="PaxDb" id="83332-Rv1325c"/>
<dbReference type="GeneID" id="886899"/>
<dbReference type="KEGG" id="mtu:Rv1325c"/>
<dbReference type="KEGG" id="mtv:RVBD_1325c"/>
<dbReference type="PATRIC" id="fig|83332.111.peg.1480"/>
<dbReference type="TubercuList" id="Rv1325c"/>
<dbReference type="eggNOG" id="COG0657">
    <property type="taxonomic scope" value="Bacteria"/>
</dbReference>
<dbReference type="InParanoid" id="P9WIF7"/>
<dbReference type="OrthoDB" id="4753186at2"/>
<dbReference type="Proteomes" id="UP000001584">
    <property type="component" value="Chromosome"/>
</dbReference>
<dbReference type="Gene3D" id="1.10.287.850">
    <property type="entry name" value="HP0062-like domain"/>
    <property type="match status" value="1"/>
</dbReference>
<dbReference type="InterPro" id="IPR000084">
    <property type="entry name" value="PE-PGRS_N"/>
</dbReference>
<dbReference type="InterPro" id="IPR048996">
    <property type="entry name" value="PGRS_rpt"/>
</dbReference>
<dbReference type="Pfam" id="PF00934">
    <property type="entry name" value="PE"/>
    <property type="match status" value="1"/>
</dbReference>
<dbReference type="Pfam" id="PF21526">
    <property type="entry name" value="PGRS"/>
    <property type="match status" value="1"/>
</dbReference>
<dbReference type="SUPFAM" id="SSF140459">
    <property type="entry name" value="PE/PPE dimer-like"/>
    <property type="match status" value="1"/>
</dbReference>
<reference key="1">
    <citation type="journal article" date="1998" name="Nature">
        <title>Deciphering the biology of Mycobacterium tuberculosis from the complete genome sequence.</title>
        <authorList>
            <person name="Cole S.T."/>
            <person name="Brosch R."/>
            <person name="Parkhill J."/>
            <person name="Garnier T."/>
            <person name="Churcher C.M."/>
            <person name="Harris D.E."/>
            <person name="Gordon S.V."/>
            <person name="Eiglmeier K."/>
            <person name="Gas S."/>
            <person name="Barry C.E. III"/>
            <person name="Tekaia F."/>
            <person name="Badcock K."/>
            <person name="Basham D."/>
            <person name="Brown D."/>
            <person name="Chillingworth T."/>
            <person name="Connor R."/>
            <person name="Davies R.M."/>
            <person name="Devlin K."/>
            <person name="Feltwell T."/>
            <person name="Gentles S."/>
            <person name="Hamlin N."/>
            <person name="Holroyd S."/>
            <person name="Hornsby T."/>
            <person name="Jagels K."/>
            <person name="Krogh A."/>
            <person name="McLean J."/>
            <person name="Moule S."/>
            <person name="Murphy L.D."/>
            <person name="Oliver S."/>
            <person name="Osborne J."/>
            <person name="Quail M.A."/>
            <person name="Rajandream M.A."/>
            <person name="Rogers J."/>
            <person name="Rutter S."/>
            <person name="Seeger K."/>
            <person name="Skelton S."/>
            <person name="Squares S."/>
            <person name="Squares R."/>
            <person name="Sulston J.E."/>
            <person name="Taylor K."/>
            <person name="Whitehead S."/>
            <person name="Barrell B.G."/>
        </authorList>
    </citation>
    <scope>NUCLEOTIDE SEQUENCE [LARGE SCALE GENOMIC DNA]</scope>
    <source>
        <strain>ATCC 25618 / H37Rv</strain>
    </source>
</reference>
<reference key="2">
    <citation type="journal article" date="2011" name="Mol. Cell. Proteomics">
        <title>Proteogenomic analysis of Mycobacterium tuberculosis by high resolution mass spectrometry.</title>
        <authorList>
            <person name="Kelkar D.S."/>
            <person name="Kumar D."/>
            <person name="Kumar P."/>
            <person name="Balakrishnan L."/>
            <person name="Muthusamy B."/>
            <person name="Yadav A.K."/>
            <person name="Shrivastava P."/>
            <person name="Marimuthu A."/>
            <person name="Anand S."/>
            <person name="Sundaram H."/>
            <person name="Kingsbury R."/>
            <person name="Harsha H.C."/>
            <person name="Nair B."/>
            <person name="Prasad T.S."/>
            <person name="Chauhan D.S."/>
            <person name="Katoch K."/>
            <person name="Katoch V.M."/>
            <person name="Kumar P."/>
            <person name="Chaerkady R."/>
            <person name="Ramachandran S."/>
            <person name="Dash D."/>
            <person name="Pandey A."/>
        </authorList>
    </citation>
    <scope>IDENTIFICATION BY MASS SPECTROMETRY [LARGE SCALE ANALYSIS]</scope>
    <source>
        <strain>ATCC 25618 / H37Rv</strain>
    </source>
</reference>
<proteinExistence type="evidence at protein level"/>
<evidence type="ECO:0000255" key="1"/>
<evidence type="ECO:0000305" key="2"/>
<feature type="chain" id="PRO_0000023577" description="Uncharacterized PE-PGRS family protein PE_PGRS24">
    <location>
        <begin position="1"/>
        <end position="603"/>
    </location>
</feature>
<feature type="domain" description="PE" evidence="1">
    <location>
        <begin position="1"/>
        <end position="93"/>
    </location>
</feature>
<name>PG24_MYCTU</name>
<sequence length="603" mass="49575">MSFVIAAPETLVRAASDLANIGSTLGAANAAALGPTTELLAAGADEVSAAIASLFAAHGQAYQAVSAQMSAFHAQFVQTFTAGAGAYASAEAAAAAPLEGLLNIVNTPTQLLLGRPLIGNGANGAPGTGQAGGAGGLLYGNGGAGGSGAPGQAGGPGGAAGLFGNGGAGGAGGDGPGNGAAGGAGGAGGLLFGSGGAGGPGGVGNTGTGGLGGDGGAAGLFGAGGIGGAGGPGFNGGAGGAGGRSGLFEVLAAGGAGGTGGLSVNGGTGGTGGTGGGGGLFSNGGAGGAGGFGVSGSAGGNGGTGGDGGIFTGNGGTGGTGGTGTGNQLVGGEGGAGGAGGNAGILFGAGGIGGTGGTGLGAPDPGGTGGKGGVGGIGGAGALFGPGGAGGTGGFGASSADQMAGGIGGSGGSGGAAKLIGDGGAGGTGGDSVRGAAGSGGTGGTGGLIGDGGAGGAGGTGIEFGSVGGAGGAGGNAAGLSGAGGAGGAGGFGETAGDGGAGGNAGLLNGDGGAGGAGGLGIAGDGGNGGKGGKAGMVGNGGDGGAGGASVVANGGVGGSGGNATLIGNGGNGGNGGVGSAPGKGGAGGTAGLLGLNGSPGLS</sequence>
<gene>
    <name type="primary">PE_PGRS24</name>
    <name type="ordered locus">Rv1325c</name>
    <name type="ORF">MTCY130.10c</name>
</gene>
<protein>
    <recommendedName>
        <fullName>Uncharacterized PE-PGRS family protein PE_PGRS24</fullName>
    </recommendedName>
</protein>